<name>ATPD_YERE8</name>
<organism>
    <name type="scientific">Yersinia enterocolitica serotype O:8 / biotype 1B (strain NCTC 13174 / 8081)</name>
    <dbReference type="NCBI Taxonomy" id="393305"/>
    <lineage>
        <taxon>Bacteria</taxon>
        <taxon>Pseudomonadati</taxon>
        <taxon>Pseudomonadota</taxon>
        <taxon>Gammaproteobacteria</taxon>
        <taxon>Enterobacterales</taxon>
        <taxon>Yersiniaceae</taxon>
        <taxon>Yersinia</taxon>
    </lineage>
</organism>
<gene>
    <name evidence="1" type="primary">atpH</name>
    <name type="ordered locus">YE4209</name>
</gene>
<reference key="1">
    <citation type="journal article" date="2006" name="PLoS Genet.">
        <title>The complete genome sequence and comparative genome analysis of the high pathogenicity Yersinia enterocolitica strain 8081.</title>
        <authorList>
            <person name="Thomson N.R."/>
            <person name="Howard S."/>
            <person name="Wren B.W."/>
            <person name="Holden M.T.G."/>
            <person name="Crossman L."/>
            <person name="Challis G.L."/>
            <person name="Churcher C."/>
            <person name="Mungall K."/>
            <person name="Brooks K."/>
            <person name="Chillingworth T."/>
            <person name="Feltwell T."/>
            <person name="Abdellah Z."/>
            <person name="Hauser H."/>
            <person name="Jagels K."/>
            <person name="Maddison M."/>
            <person name="Moule S."/>
            <person name="Sanders M."/>
            <person name="Whitehead S."/>
            <person name="Quail M.A."/>
            <person name="Dougan G."/>
            <person name="Parkhill J."/>
            <person name="Prentice M.B."/>
        </authorList>
    </citation>
    <scope>NUCLEOTIDE SEQUENCE [LARGE SCALE GENOMIC DNA]</scope>
    <source>
        <strain>NCTC 13174 / 8081</strain>
    </source>
</reference>
<feature type="chain" id="PRO_0000371199" description="ATP synthase subunit delta">
    <location>
        <begin position="1"/>
        <end position="177"/>
    </location>
</feature>
<comment type="function">
    <text evidence="1">F(1)F(0) ATP synthase produces ATP from ADP in the presence of a proton or sodium gradient. F-type ATPases consist of two structural domains, F(1) containing the extramembraneous catalytic core and F(0) containing the membrane proton channel, linked together by a central stalk and a peripheral stalk. During catalysis, ATP synthesis in the catalytic domain of F(1) is coupled via a rotary mechanism of the central stalk subunits to proton translocation.</text>
</comment>
<comment type="function">
    <text evidence="1">This protein is part of the stalk that links CF(0) to CF(1). It either transmits conformational changes from CF(0) to CF(1) or is implicated in proton conduction.</text>
</comment>
<comment type="subunit">
    <text evidence="1">F-type ATPases have 2 components, F(1) - the catalytic core - and F(0) - the membrane proton channel. F(1) has five subunits: alpha(3), beta(3), gamma(1), delta(1), epsilon(1). F(0) has three main subunits: a(1), b(2) and c(10-14). The alpha and beta chains form an alternating ring which encloses part of the gamma chain. F(1) is attached to F(0) by a central stalk formed by the gamma and epsilon chains, while a peripheral stalk is formed by the delta and b chains.</text>
</comment>
<comment type="subcellular location">
    <subcellularLocation>
        <location evidence="1">Cell inner membrane</location>
        <topology evidence="1">Peripheral membrane protein</topology>
    </subcellularLocation>
</comment>
<comment type="similarity">
    <text evidence="1">Belongs to the ATPase delta chain family.</text>
</comment>
<proteinExistence type="inferred from homology"/>
<dbReference type="EMBL" id="AM286415">
    <property type="protein sequence ID" value="CAL14223.1"/>
    <property type="molecule type" value="Genomic_DNA"/>
</dbReference>
<dbReference type="RefSeq" id="WP_005175171.1">
    <property type="nucleotide sequence ID" value="NC_008800.1"/>
</dbReference>
<dbReference type="RefSeq" id="YP_001008341.1">
    <property type="nucleotide sequence ID" value="NC_008800.1"/>
</dbReference>
<dbReference type="SMR" id="A1JTD0"/>
<dbReference type="KEGG" id="yen:YE4209"/>
<dbReference type="PATRIC" id="fig|393305.7.peg.4475"/>
<dbReference type="eggNOG" id="COG0712">
    <property type="taxonomic scope" value="Bacteria"/>
</dbReference>
<dbReference type="HOGENOM" id="CLU_085114_3_0_6"/>
<dbReference type="OrthoDB" id="9816221at2"/>
<dbReference type="Proteomes" id="UP000000642">
    <property type="component" value="Chromosome"/>
</dbReference>
<dbReference type="GO" id="GO:0005886">
    <property type="term" value="C:plasma membrane"/>
    <property type="evidence" value="ECO:0007669"/>
    <property type="project" value="UniProtKB-SubCell"/>
</dbReference>
<dbReference type="GO" id="GO:0045259">
    <property type="term" value="C:proton-transporting ATP synthase complex"/>
    <property type="evidence" value="ECO:0007669"/>
    <property type="project" value="UniProtKB-KW"/>
</dbReference>
<dbReference type="GO" id="GO:0046933">
    <property type="term" value="F:proton-transporting ATP synthase activity, rotational mechanism"/>
    <property type="evidence" value="ECO:0007669"/>
    <property type="project" value="UniProtKB-UniRule"/>
</dbReference>
<dbReference type="FunFam" id="1.10.520.20:FF:000001">
    <property type="entry name" value="ATP synthase subunit delta"/>
    <property type="match status" value="1"/>
</dbReference>
<dbReference type="Gene3D" id="1.10.520.20">
    <property type="entry name" value="N-terminal domain of the delta subunit of the F1F0-ATP synthase"/>
    <property type="match status" value="1"/>
</dbReference>
<dbReference type="HAMAP" id="MF_01416">
    <property type="entry name" value="ATP_synth_delta_bact"/>
    <property type="match status" value="1"/>
</dbReference>
<dbReference type="InterPro" id="IPR026015">
    <property type="entry name" value="ATP_synth_OSCP/delta_N_sf"/>
</dbReference>
<dbReference type="InterPro" id="IPR020781">
    <property type="entry name" value="ATPase_OSCP/d_CS"/>
</dbReference>
<dbReference type="InterPro" id="IPR000711">
    <property type="entry name" value="ATPase_OSCP/dsu"/>
</dbReference>
<dbReference type="NCBIfam" id="TIGR01145">
    <property type="entry name" value="ATP_synt_delta"/>
    <property type="match status" value="1"/>
</dbReference>
<dbReference type="NCBIfam" id="NF004402">
    <property type="entry name" value="PRK05758.2-2"/>
    <property type="match status" value="1"/>
</dbReference>
<dbReference type="NCBIfam" id="NF004404">
    <property type="entry name" value="PRK05758.2-5"/>
    <property type="match status" value="1"/>
</dbReference>
<dbReference type="PANTHER" id="PTHR11910">
    <property type="entry name" value="ATP SYNTHASE DELTA CHAIN"/>
    <property type="match status" value="1"/>
</dbReference>
<dbReference type="Pfam" id="PF00213">
    <property type="entry name" value="OSCP"/>
    <property type="match status" value="1"/>
</dbReference>
<dbReference type="PRINTS" id="PR00125">
    <property type="entry name" value="ATPASEDELTA"/>
</dbReference>
<dbReference type="SUPFAM" id="SSF47928">
    <property type="entry name" value="N-terminal domain of the delta subunit of the F1F0-ATP synthase"/>
    <property type="match status" value="1"/>
</dbReference>
<dbReference type="PROSITE" id="PS00389">
    <property type="entry name" value="ATPASE_DELTA"/>
    <property type="match status" value="1"/>
</dbReference>
<protein>
    <recommendedName>
        <fullName evidence="1">ATP synthase subunit delta</fullName>
    </recommendedName>
    <alternativeName>
        <fullName evidence="1">ATP synthase F(1) sector subunit delta</fullName>
    </alternativeName>
    <alternativeName>
        <fullName evidence="1">F-type ATPase subunit delta</fullName>
        <shortName evidence="1">F-ATPase subunit delta</shortName>
    </alternativeName>
</protein>
<keyword id="KW-0066">ATP synthesis</keyword>
<keyword id="KW-0997">Cell inner membrane</keyword>
<keyword id="KW-1003">Cell membrane</keyword>
<keyword id="KW-0139">CF(1)</keyword>
<keyword id="KW-0375">Hydrogen ion transport</keyword>
<keyword id="KW-0406">Ion transport</keyword>
<keyword id="KW-0472">Membrane</keyword>
<keyword id="KW-0813">Transport</keyword>
<sequence length="177" mass="19451">MSEFVTVARPYAKAAFDFAVEHQAVDRWQDMLAFTAQVTRNEQIAELLSGAVAPETMSKTFIAVCGDQLDEPAQNFIRVMAENGRLLVLPEVLLQFIQLRASLESTVDVEVSSASPLNDEQLAKIAAAMEKRLSRKVKLNCKIDKSVMAGVVIRAGDMVIDGSVRGRLERLADVLQS</sequence>
<accession>A1JTD0</accession>
<evidence type="ECO:0000255" key="1">
    <source>
        <dbReference type="HAMAP-Rule" id="MF_01416"/>
    </source>
</evidence>